<protein>
    <recommendedName>
        <fullName evidence="1">Ribosome maturation factor RimP</fullName>
    </recommendedName>
</protein>
<accession>Q2YQS0</accession>
<dbReference type="EMBL" id="AM040264">
    <property type="protein sequence ID" value="CAJ12118.1"/>
    <property type="molecule type" value="Genomic_DNA"/>
</dbReference>
<dbReference type="RefSeq" id="WP_002967047.1">
    <property type="nucleotide sequence ID" value="NZ_KN046823.1"/>
</dbReference>
<dbReference type="SMR" id="Q2YQS0"/>
<dbReference type="STRING" id="359391.BAB1_2162"/>
<dbReference type="GeneID" id="93017536"/>
<dbReference type="KEGG" id="bmf:BAB1_2162"/>
<dbReference type="PATRIC" id="fig|359391.11.peg.1398"/>
<dbReference type="HOGENOM" id="CLU_070525_0_1_5"/>
<dbReference type="PhylomeDB" id="Q2YQS0"/>
<dbReference type="Proteomes" id="UP000002719">
    <property type="component" value="Chromosome I"/>
</dbReference>
<dbReference type="GO" id="GO:0005829">
    <property type="term" value="C:cytosol"/>
    <property type="evidence" value="ECO:0007669"/>
    <property type="project" value="TreeGrafter"/>
</dbReference>
<dbReference type="GO" id="GO:0000028">
    <property type="term" value="P:ribosomal small subunit assembly"/>
    <property type="evidence" value="ECO:0007669"/>
    <property type="project" value="TreeGrafter"/>
</dbReference>
<dbReference type="GO" id="GO:0006412">
    <property type="term" value="P:translation"/>
    <property type="evidence" value="ECO:0007669"/>
    <property type="project" value="TreeGrafter"/>
</dbReference>
<dbReference type="CDD" id="cd01734">
    <property type="entry name" value="YlxS_C"/>
    <property type="match status" value="1"/>
</dbReference>
<dbReference type="Gene3D" id="3.30.300.70">
    <property type="entry name" value="RimP-like superfamily, N-terminal"/>
    <property type="match status" value="1"/>
</dbReference>
<dbReference type="HAMAP" id="MF_01077">
    <property type="entry name" value="RimP"/>
    <property type="match status" value="1"/>
</dbReference>
<dbReference type="InterPro" id="IPR003728">
    <property type="entry name" value="Ribosome_maturation_RimP"/>
</dbReference>
<dbReference type="InterPro" id="IPR028998">
    <property type="entry name" value="RimP_C"/>
</dbReference>
<dbReference type="InterPro" id="IPR036847">
    <property type="entry name" value="RimP_C_sf"/>
</dbReference>
<dbReference type="InterPro" id="IPR028989">
    <property type="entry name" value="RimP_N"/>
</dbReference>
<dbReference type="InterPro" id="IPR035956">
    <property type="entry name" value="RimP_N_sf"/>
</dbReference>
<dbReference type="NCBIfam" id="NF000932">
    <property type="entry name" value="PRK00092.2-5"/>
    <property type="match status" value="1"/>
</dbReference>
<dbReference type="PANTHER" id="PTHR33867">
    <property type="entry name" value="RIBOSOME MATURATION FACTOR RIMP"/>
    <property type="match status" value="1"/>
</dbReference>
<dbReference type="PANTHER" id="PTHR33867:SF1">
    <property type="entry name" value="RIBOSOME MATURATION FACTOR RIMP"/>
    <property type="match status" value="1"/>
</dbReference>
<dbReference type="Pfam" id="PF17384">
    <property type="entry name" value="DUF150_C"/>
    <property type="match status" value="1"/>
</dbReference>
<dbReference type="Pfam" id="PF02576">
    <property type="entry name" value="RimP_N"/>
    <property type="match status" value="1"/>
</dbReference>
<dbReference type="SUPFAM" id="SSF74942">
    <property type="entry name" value="YhbC-like, C-terminal domain"/>
    <property type="match status" value="1"/>
</dbReference>
<dbReference type="SUPFAM" id="SSF75420">
    <property type="entry name" value="YhbC-like, N-terminal domain"/>
    <property type="match status" value="1"/>
</dbReference>
<name>RIMP_BRUA2</name>
<gene>
    <name evidence="1" type="primary">rimP</name>
    <name type="ordered locus">BAB1_2162</name>
</gene>
<comment type="function">
    <text evidence="1">Required for maturation of 30S ribosomal subunits.</text>
</comment>
<comment type="subcellular location">
    <subcellularLocation>
        <location evidence="1">Cytoplasm</location>
    </subcellularLocation>
</comment>
<comment type="similarity">
    <text evidence="1">Belongs to the RimP family.</text>
</comment>
<organism>
    <name type="scientific">Brucella abortus (strain 2308)</name>
    <dbReference type="NCBI Taxonomy" id="359391"/>
    <lineage>
        <taxon>Bacteria</taxon>
        <taxon>Pseudomonadati</taxon>
        <taxon>Pseudomonadota</taxon>
        <taxon>Alphaproteobacteria</taxon>
        <taxon>Hyphomicrobiales</taxon>
        <taxon>Brucellaceae</taxon>
        <taxon>Brucella/Ochrobactrum group</taxon>
        <taxon>Brucella</taxon>
    </lineage>
</organism>
<evidence type="ECO:0000255" key="1">
    <source>
        <dbReference type="HAMAP-Rule" id="MF_01077"/>
    </source>
</evidence>
<evidence type="ECO:0000256" key="2">
    <source>
        <dbReference type="SAM" id="MobiDB-lite"/>
    </source>
</evidence>
<reference key="1">
    <citation type="journal article" date="2005" name="Infect. Immun.">
        <title>Whole-genome analyses of speciation events in pathogenic Brucellae.</title>
        <authorList>
            <person name="Chain P.S."/>
            <person name="Comerci D.J."/>
            <person name="Tolmasky M.E."/>
            <person name="Larimer F.W."/>
            <person name="Malfatti S.A."/>
            <person name="Vergez L.M."/>
            <person name="Aguero F."/>
            <person name="Land M.L."/>
            <person name="Ugalde R.A."/>
            <person name="Garcia E."/>
        </authorList>
    </citation>
    <scope>NUCLEOTIDE SEQUENCE [LARGE SCALE GENOMIC DNA]</scope>
    <source>
        <strain>2308</strain>
    </source>
</reference>
<proteinExistence type="inferred from homology"/>
<keyword id="KW-0963">Cytoplasm</keyword>
<keyword id="KW-1185">Reference proteome</keyword>
<keyword id="KW-0690">Ribosome biogenesis</keyword>
<feature type="chain" id="PRO_0000229224" description="Ribosome maturation factor RimP">
    <location>
        <begin position="1"/>
        <end position="219"/>
    </location>
</feature>
<feature type="region of interest" description="Disordered" evidence="2">
    <location>
        <begin position="195"/>
        <end position="219"/>
    </location>
</feature>
<sequence length="219" mass="24067">MTEQVQANETETPVAVADERIIRETGIDAKVAGIVEPVINTLGFRLVRVRLSGLNGQTLQIMAERPDGTMTVDDCELVSRTVAPVLDVEDPISGKYHLEISSPGIDRPLVRKSDFSDWAGHIAKVETSIVHEGRKKFRGRIVVGEADSVTIESDQISYGNEPVVRIPFDLISDARLVLTDDLIRDALRKDKALREGRIPGDDLGAEPEDVASTETQEKK</sequence>